<reference key="1">
    <citation type="submission" date="1992-01" db="EMBL/GenBank/DDBJ databases">
        <title>Sequence of Bacillus subtilis dbpA, mtr(A,B), gerC(1-3), ndk, cheR, aro(B,E,F,H), trp(A-F), hisH, and tyrA genes.</title>
        <authorList>
            <person name="Henner D.J."/>
        </authorList>
    </citation>
    <scope>NUCLEOTIDE SEQUENCE [GENOMIC DNA]</scope>
</reference>
<reference key="2">
    <citation type="journal article" date="1997" name="Nature">
        <title>The complete genome sequence of the Gram-positive bacterium Bacillus subtilis.</title>
        <authorList>
            <person name="Kunst F."/>
            <person name="Ogasawara N."/>
            <person name="Moszer I."/>
            <person name="Albertini A.M."/>
            <person name="Alloni G."/>
            <person name="Azevedo V."/>
            <person name="Bertero M.G."/>
            <person name="Bessieres P."/>
            <person name="Bolotin A."/>
            <person name="Borchert S."/>
            <person name="Borriss R."/>
            <person name="Boursier L."/>
            <person name="Brans A."/>
            <person name="Braun M."/>
            <person name="Brignell S.C."/>
            <person name="Bron S."/>
            <person name="Brouillet S."/>
            <person name="Bruschi C.V."/>
            <person name="Caldwell B."/>
            <person name="Capuano V."/>
            <person name="Carter N.M."/>
            <person name="Choi S.-K."/>
            <person name="Codani J.-J."/>
            <person name="Connerton I.F."/>
            <person name="Cummings N.J."/>
            <person name="Daniel R.A."/>
            <person name="Denizot F."/>
            <person name="Devine K.M."/>
            <person name="Duesterhoeft A."/>
            <person name="Ehrlich S.D."/>
            <person name="Emmerson P.T."/>
            <person name="Entian K.-D."/>
            <person name="Errington J."/>
            <person name="Fabret C."/>
            <person name="Ferrari E."/>
            <person name="Foulger D."/>
            <person name="Fritz C."/>
            <person name="Fujita M."/>
            <person name="Fujita Y."/>
            <person name="Fuma S."/>
            <person name="Galizzi A."/>
            <person name="Galleron N."/>
            <person name="Ghim S.-Y."/>
            <person name="Glaser P."/>
            <person name="Goffeau A."/>
            <person name="Golightly E.J."/>
            <person name="Grandi G."/>
            <person name="Guiseppi G."/>
            <person name="Guy B.J."/>
            <person name="Haga K."/>
            <person name="Haiech J."/>
            <person name="Harwood C.R."/>
            <person name="Henaut A."/>
            <person name="Hilbert H."/>
            <person name="Holsappel S."/>
            <person name="Hosono S."/>
            <person name="Hullo M.-F."/>
            <person name="Itaya M."/>
            <person name="Jones L.-M."/>
            <person name="Joris B."/>
            <person name="Karamata D."/>
            <person name="Kasahara Y."/>
            <person name="Klaerr-Blanchard M."/>
            <person name="Klein C."/>
            <person name="Kobayashi Y."/>
            <person name="Koetter P."/>
            <person name="Koningstein G."/>
            <person name="Krogh S."/>
            <person name="Kumano M."/>
            <person name="Kurita K."/>
            <person name="Lapidus A."/>
            <person name="Lardinois S."/>
            <person name="Lauber J."/>
            <person name="Lazarevic V."/>
            <person name="Lee S.-M."/>
            <person name="Levine A."/>
            <person name="Liu H."/>
            <person name="Masuda S."/>
            <person name="Mauel C."/>
            <person name="Medigue C."/>
            <person name="Medina N."/>
            <person name="Mellado R.P."/>
            <person name="Mizuno M."/>
            <person name="Moestl D."/>
            <person name="Nakai S."/>
            <person name="Noback M."/>
            <person name="Noone D."/>
            <person name="O'Reilly M."/>
            <person name="Ogawa K."/>
            <person name="Ogiwara A."/>
            <person name="Oudega B."/>
            <person name="Park S.-H."/>
            <person name="Parro V."/>
            <person name="Pohl T.M."/>
            <person name="Portetelle D."/>
            <person name="Porwollik S."/>
            <person name="Prescott A.M."/>
            <person name="Presecan E."/>
            <person name="Pujic P."/>
            <person name="Purnelle B."/>
            <person name="Rapoport G."/>
            <person name="Rey M."/>
            <person name="Reynolds S."/>
            <person name="Rieger M."/>
            <person name="Rivolta C."/>
            <person name="Rocha E."/>
            <person name="Roche B."/>
            <person name="Rose M."/>
            <person name="Sadaie Y."/>
            <person name="Sato T."/>
            <person name="Scanlan E."/>
            <person name="Schleich S."/>
            <person name="Schroeter R."/>
            <person name="Scoffone F."/>
            <person name="Sekiguchi J."/>
            <person name="Sekowska A."/>
            <person name="Seror S.J."/>
            <person name="Serror P."/>
            <person name="Shin B.-S."/>
            <person name="Soldo B."/>
            <person name="Sorokin A."/>
            <person name="Tacconi E."/>
            <person name="Takagi T."/>
            <person name="Takahashi H."/>
            <person name="Takemaru K."/>
            <person name="Takeuchi M."/>
            <person name="Tamakoshi A."/>
            <person name="Tanaka T."/>
            <person name="Terpstra P."/>
            <person name="Tognoni A."/>
            <person name="Tosato V."/>
            <person name="Uchiyama S."/>
            <person name="Vandenbol M."/>
            <person name="Vannier F."/>
            <person name="Vassarotti A."/>
            <person name="Viari A."/>
            <person name="Wambutt R."/>
            <person name="Wedler E."/>
            <person name="Wedler H."/>
            <person name="Weitzenegger T."/>
            <person name="Winters P."/>
            <person name="Wipat A."/>
            <person name="Yamamoto H."/>
            <person name="Yamane K."/>
            <person name="Yasumoto K."/>
            <person name="Yata K."/>
            <person name="Yoshida K."/>
            <person name="Yoshikawa H.-F."/>
            <person name="Zumstein E."/>
            <person name="Yoshikawa H."/>
            <person name="Danchin A."/>
        </authorList>
    </citation>
    <scope>NUCLEOTIDE SEQUENCE [LARGE SCALE GENOMIC DNA]</scope>
    <source>
        <strain>168</strain>
    </source>
</reference>
<organism>
    <name type="scientific">Bacillus subtilis (strain 168)</name>
    <dbReference type="NCBI Taxonomy" id="224308"/>
    <lineage>
        <taxon>Bacteria</taxon>
        <taxon>Bacillati</taxon>
        <taxon>Bacillota</taxon>
        <taxon>Bacilli</taxon>
        <taxon>Bacillales</taxon>
        <taxon>Bacillaceae</taxon>
        <taxon>Bacillus</taxon>
    </lineage>
</organism>
<protein>
    <recommendedName>
        <fullName evidence="1">3-dehydroquinate synthase</fullName>
        <shortName evidence="1">DHQS</shortName>
        <ecNumber evidence="1">4.2.3.4</ecNumber>
    </recommendedName>
</protein>
<accession>P31102</accession>
<sequence length="362" mass="40817">MKTLHVQTASSSYPVFIGQGIRKKACELLTSLNRPLTRIMFVTDEEVDRLYGDEMLHLLQEKWPVKKVTVPSGEQAKSMDMYTKLQSEAIRFHMDRSSCIIAFGGGVVGDLAGFVAATFMRGIDFIQMPTTLLAHDSAVGGKVAVNHPLGKNLIGAFYQPKAVLYDTDFLRSLPEKELRSGMAEVIKHAFIYDRAFLEELLNIHSLRDITNDQLNDMIFKGISIKASVVQQDEKEEGIRAYLNFGHTLGHAVEAEYGYGQITHGDAVALGMQFALYISEKTVGCEMDRKRLVSWLKSLGYPSQIRKETETSVLLNRMMNDKKTRGGKIQFIVLNELGKVADHTFSRNELESWLNKWRLEETS</sequence>
<comment type="function">
    <text evidence="1">Catalyzes the conversion of 3-deoxy-D-arabino-heptulosonate 7-phosphate (DAHP) to dehydroquinate (DHQ).</text>
</comment>
<comment type="catalytic activity">
    <reaction evidence="1">
        <text>7-phospho-2-dehydro-3-deoxy-D-arabino-heptonate = 3-dehydroquinate + phosphate</text>
        <dbReference type="Rhea" id="RHEA:21968"/>
        <dbReference type="ChEBI" id="CHEBI:32364"/>
        <dbReference type="ChEBI" id="CHEBI:43474"/>
        <dbReference type="ChEBI" id="CHEBI:58394"/>
        <dbReference type="EC" id="4.2.3.4"/>
    </reaction>
</comment>
<comment type="cofactor">
    <cofactor evidence="1">
        <name>NAD(+)</name>
        <dbReference type="ChEBI" id="CHEBI:57540"/>
    </cofactor>
</comment>
<comment type="cofactor">
    <cofactor evidence="1">
        <name>Co(2+)</name>
        <dbReference type="ChEBI" id="CHEBI:48828"/>
    </cofactor>
    <cofactor evidence="1">
        <name>Zn(2+)</name>
        <dbReference type="ChEBI" id="CHEBI:29105"/>
    </cofactor>
    <text evidence="1">Binds 1 divalent metal cation per subunit. Can use either Co(2+) or Zn(2+).</text>
</comment>
<comment type="pathway">
    <text evidence="1">Metabolic intermediate biosynthesis; chorismate biosynthesis; chorismate from D-erythrose 4-phosphate and phosphoenolpyruvate: step 2/7.</text>
</comment>
<comment type="subcellular location">
    <subcellularLocation>
        <location evidence="1">Cytoplasm</location>
    </subcellularLocation>
</comment>
<comment type="similarity">
    <text evidence="1 2">Belongs to the sugar phosphate cyclases superfamily. Dehydroquinate synthase family.</text>
</comment>
<dbReference type="EC" id="4.2.3.4" evidence="1"/>
<dbReference type="EMBL" id="M80245">
    <property type="protein sequence ID" value="AAA20860.1"/>
    <property type="molecule type" value="Genomic_DNA"/>
</dbReference>
<dbReference type="EMBL" id="AL009126">
    <property type="protein sequence ID" value="CAB14186.1"/>
    <property type="molecule type" value="Genomic_DNA"/>
</dbReference>
<dbReference type="PIR" id="G69589">
    <property type="entry name" value="G69589"/>
</dbReference>
<dbReference type="RefSeq" id="NP_390151.1">
    <property type="nucleotide sequence ID" value="NC_000964.3"/>
</dbReference>
<dbReference type="RefSeq" id="WP_003230592.1">
    <property type="nucleotide sequence ID" value="NZ_OZ025638.1"/>
</dbReference>
<dbReference type="SMR" id="P31102"/>
<dbReference type="FunCoup" id="P31102">
    <property type="interactions" value="566"/>
</dbReference>
<dbReference type="STRING" id="224308.BSU22700"/>
<dbReference type="PaxDb" id="224308-BSU22700"/>
<dbReference type="EnsemblBacteria" id="CAB14186">
    <property type="protein sequence ID" value="CAB14186"/>
    <property type="gene ID" value="BSU_22700"/>
</dbReference>
<dbReference type="GeneID" id="939001"/>
<dbReference type="KEGG" id="bsu:BSU22700"/>
<dbReference type="eggNOG" id="COG0337">
    <property type="taxonomic scope" value="Bacteria"/>
</dbReference>
<dbReference type="InParanoid" id="P31102"/>
<dbReference type="OrthoDB" id="9806583at2"/>
<dbReference type="PhylomeDB" id="P31102"/>
<dbReference type="BioCyc" id="BSUB:BSU22700-MONOMER"/>
<dbReference type="UniPathway" id="UPA00053">
    <property type="reaction ID" value="UER00085"/>
</dbReference>
<dbReference type="Proteomes" id="UP000001570">
    <property type="component" value="Chromosome"/>
</dbReference>
<dbReference type="GO" id="GO:0005737">
    <property type="term" value="C:cytoplasm"/>
    <property type="evidence" value="ECO:0007669"/>
    <property type="project" value="UniProtKB-SubCell"/>
</dbReference>
<dbReference type="GO" id="GO:0003856">
    <property type="term" value="F:3-dehydroquinate synthase activity"/>
    <property type="evidence" value="ECO:0000318"/>
    <property type="project" value="GO_Central"/>
</dbReference>
<dbReference type="GO" id="GO:0046872">
    <property type="term" value="F:metal ion binding"/>
    <property type="evidence" value="ECO:0007669"/>
    <property type="project" value="UniProtKB-KW"/>
</dbReference>
<dbReference type="GO" id="GO:0000166">
    <property type="term" value="F:nucleotide binding"/>
    <property type="evidence" value="ECO:0007669"/>
    <property type="project" value="UniProtKB-KW"/>
</dbReference>
<dbReference type="GO" id="GO:0008652">
    <property type="term" value="P:amino acid biosynthetic process"/>
    <property type="evidence" value="ECO:0007669"/>
    <property type="project" value="UniProtKB-KW"/>
</dbReference>
<dbReference type="GO" id="GO:0009073">
    <property type="term" value="P:aromatic amino acid family biosynthetic process"/>
    <property type="evidence" value="ECO:0000318"/>
    <property type="project" value="GO_Central"/>
</dbReference>
<dbReference type="GO" id="GO:0009423">
    <property type="term" value="P:chorismate biosynthetic process"/>
    <property type="evidence" value="ECO:0007669"/>
    <property type="project" value="UniProtKB-UniRule"/>
</dbReference>
<dbReference type="CDD" id="cd08195">
    <property type="entry name" value="DHQS"/>
    <property type="match status" value="1"/>
</dbReference>
<dbReference type="FunFam" id="3.40.50.1970:FF:000001">
    <property type="entry name" value="3-dehydroquinate synthase"/>
    <property type="match status" value="1"/>
</dbReference>
<dbReference type="Gene3D" id="3.40.50.1970">
    <property type="match status" value="1"/>
</dbReference>
<dbReference type="Gene3D" id="1.20.1090.10">
    <property type="entry name" value="Dehydroquinate synthase-like - alpha domain"/>
    <property type="match status" value="1"/>
</dbReference>
<dbReference type="HAMAP" id="MF_00110">
    <property type="entry name" value="DHQ_synthase"/>
    <property type="match status" value="1"/>
</dbReference>
<dbReference type="InterPro" id="IPR050071">
    <property type="entry name" value="Dehydroquinate_synthase"/>
</dbReference>
<dbReference type="InterPro" id="IPR016037">
    <property type="entry name" value="DHQ_synth_AroB"/>
</dbReference>
<dbReference type="InterPro" id="IPR030963">
    <property type="entry name" value="DHQ_synth_fam"/>
</dbReference>
<dbReference type="InterPro" id="IPR030960">
    <property type="entry name" value="DHQS/DOIS_N"/>
</dbReference>
<dbReference type="InterPro" id="IPR056179">
    <property type="entry name" value="DHQS_C"/>
</dbReference>
<dbReference type="NCBIfam" id="TIGR01357">
    <property type="entry name" value="aroB"/>
    <property type="match status" value="1"/>
</dbReference>
<dbReference type="PANTHER" id="PTHR43622">
    <property type="entry name" value="3-DEHYDROQUINATE SYNTHASE"/>
    <property type="match status" value="1"/>
</dbReference>
<dbReference type="PANTHER" id="PTHR43622:SF7">
    <property type="entry name" value="3-DEHYDROQUINATE SYNTHASE, CHLOROPLASTIC"/>
    <property type="match status" value="1"/>
</dbReference>
<dbReference type="Pfam" id="PF01761">
    <property type="entry name" value="DHQ_synthase"/>
    <property type="match status" value="1"/>
</dbReference>
<dbReference type="Pfam" id="PF24621">
    <property type="entry name" value="DHQS_C"/>
    <property type="match status" value="1"/>
</dbReference>
<dbReference type="PIRSF" id="PIRSF001455">
    <property type="entry name" value="DHQ_synth"/>
    <property type="match status" value="1"/>
</dbReference>
<dbReference type="SUPFAM" id="SSF56796">
    <property type="entry name" value="Dehydroquinate synthase-like"/>
    <property type="match status" value="1"/>
</dbReference>
<feature type="chain" id="PRO_0000140710" description="3-dehydroquinate synthase">
    <location>
        <begin position="1"/>
        <end position="362"/>
    </location>
</feature>
<feature type="binding site" evidence="1">
    <location>
        <begin position="72"/>
        <end position="77"/>
    </location>
    <ligand>
        <name>NAD(+)</name>
        <dbReference type="ChEBI" id="CHEBI:57540"/>
    </ligand>
</feature>
<feature type="binding site" evidence="1">
    <location>
        <begin position="106"/>
        <end position="110"/>
    </location>
    <ligand>
        <name>NAD(+)</name>
        <dbReference type="ChEBI" id="CHEBI:57540"/>
    </ligand>
</feature>
<feature type="binding site" evidence="1">
    <location>
        <begin position="130"/>
        <end position="131"/>
    </location>
    <ligand>
        <name>NAD(+)</name>
        <dbReference type="ChEBI" id="CHEBI:57540"/>
    </ligand>
</feature>
<feature type="binding site" evidence="1">
    <location>
        <position position="142"/>
    </location>
    <ligand>
        <name>NAD(+)</name>
        <dbReference type="ChEBI" id="CHEBI:57540"/>
    </ligand>
</feature>
<feature type="binding site" evidence="1">
    <location>
        <position position="151"/>
    </location>
    <ligand>
        <name>NAD(+)</name>
        <dbReference type="ChEBI" id="CHEBI:57540"/>
    </ligand>
</feature>
<feature type="binding site" evidence="1">
    <location>
        <position position="184"/>
    </location>
    <ligand>
        <name>Zn(2+)</name>
        <dbReference type="ChEBI" id="CHEBI:29105"/>
    </ligand>
</feature>
<feature type="binding site" evidence="1">
    <location>
        <position position="246"/>
    </location>
    <ligand>
        <name>Zn(2+)</name>
        <dbReference type="ChEBI" id="CHEBI:29105"/>
    </ligand>
</feature>
<feature type="binding site" evidence="1">
    <location>
        <position position="263"/>
    </location>
    <ligand>
        <name>Zn(2+)</name>
        <dbReference type="ChEBI" id="CHEBI:29105"/>
    </ligand>
</feature>
<gene>
    <name evidence="1" type="primary">aroB</name>
    <name type="ordered locus">BSU22700</name>
</gene>
<keyword id="KW-0028">Amino-acid biosynthesis</keyword>
<keyword id="KW-0057">Aromatic amino acid biosynthesis</keyword>
<keyword id="KW-0170">Cobalt</keyword>
<keyword id="KW-0963">Cytoplasm</keyword>
<keyword id="KW-0456">Lyase</keyword>
<keyword id="KW-0479">Metal-binding</keyword>
<keyword id="KW-0520">NAD</keyword>
<keyword id="KW-0547">Nucleotide-binding</keyword>
<keyword id="KW-1185">Reference proteome</keyword>
<keyword id="KW-0862">Zinc</keyword>
<proteinExistence type="inferred from homology"/>
<name>AROB_BACSU</name>
<evidence type="ECO:0000255" key="1">
    <source>
        <dbReference type="HAMAP-Rule" id="MF_00110"/>
    </source>
</evidence>
<evidence type="ECO:0000305" key="2"/>